<keyword id="KW-1185">Reference proteome</keyword>
<organism>
    <name type="scientific">Arabidopsis thaliana</name>
    <name type="common">Mouse-ear cress</name>
    <dbReference type="NCBI Taxonomy" id="3702"/>
    <lineage>
        <taxon>Eukaryota</taxon>
        <taxon>Viridiplantae</taxon>
        <taxon>Streptophyta</taxon>
        <taxon>Embryophyta</taxon>
        <taxon>Tracheophyta</taxon>
        <taxon>Spermatophyta</taxon>
        <taxon>Magnoliopsida</taxon>
        <taxon>eudicotyledons</taxon>
        <taxon>Gunneridae</taxon>
        <taxon>Pentapetalae</taxon>
        <taxon>rosids</taxon>
        <taxon>malvids</taxon>
        <taxon>Brassicales</taxon>
        <taxon>Brassicaceae</taxon>
        <taxon>Camelineae</taxon>
        <taxon>Arabidopsis</taxon>
    </lineage>
</organism>
<reference key="1">
    <citation type="journal article" date="2000" name="Nature">
        <title>Sequence and analysis of chromosome 1 of the plant Arabidopsis thaliana.</title>
        <authorList>
            <person name="Theologis A."/>
            <person name="Ecker J.R."/>
            <person name="Palm C.J."/>
            <person name="Federspiel N.A."/>
            <person name="Kaul S."/>
            <person name="White O."/>
            <person name="Alonso J."/>
            <person name="Altafi H."/>
            <person name="Araujo R."/>
            <person name="Bowman C.L."/>
            <person name="Brooks S.Y."/>
            <person name="Buehler E."/>
            <person name="Chan A."/>
            <person name="Chao Q."/>
            <person name="Chen H."/>
            <person name="Cheuk R.F."/>
            <person name="Chin C.W."/>
            <person name="Chung M.K."/>
            <person name="Conn L."/>
            <person name="Conway A.B."/>
            <person name="Conway A.R."/>
            <person name="Creasy T.H."/>
            <person name="Dewar K."/>
            <person name="Dunn P."/>
            <person name="Etgu P."/>
            <person name="Feldblyum T.V."/>
            <person name="Feng J.-D."/>
            <person name="Fong B."/>
            <person name="Fujii C.Y."/>
            <person name="Gill J.E."/>
            <person name="Goldsmith A.D."/>
            <person name="Haas B."/>
            <person name="Hansen N.F."/>
            <person name="Hughes B."/>
            <person name="Huizar L."/>
            <person name="Hunter J.L."/>
            <person name="Jenkins J."/>
            <person name="Johnson-Hopson C."/>
            <person name="Khan S."/>
            <person name="Khaykin E."/>
            <person name="Kim C.J."/>
            <person name="Koo H.L."/>
            <person name="Kremenetskaia I."/>
            <person name="Kurtz D.B."/>
            <person name="Kwan A."/>
            <person name="Lam B."/>
            <person name="Langin-Hooper S."/>
            <person name="Lee A."/>
            <person name="Lee J.M."/>
            <person name="Lenz C.A."/>
            <person name="Li J.H."/>
            <person name="Li Y.-P."/>
            <person name="Lin X."/>
            <person name="Liu S.X."/>
            <person name="Liu Z.A."/>
            <person name="Luros J.S."/>
            <person name="Maiti R."/>
            <person name="Marziali A."/>
            <person name="Militscher J."/>
            <person name="Miranda M."/>
            <person name="Nguyen M."/>
            <person name="Nierman W.C."/>
            <person name="Osborne B.I."/>
            <person name="Pai G."/>
            <person name="Peterson J."/>
            <person name="Pham P.K."/>
            <person name="Rizzo M."/>
            <person name="Rooney T."/>
            <person name="Rowley D."/>
            <person name="Sakano H."/>
            <person name="Salzberg S.L."/>
            <person name="Schwartz J.R."/>
            <person name="Shinn P."/>
            <person name="Southwick A.M."/>
            <person name="Sun H."/>
            <person name="Tallon L.J."/>
            <person name="Tambunga G."/>
            <person name="Toriumi M.J."/>
            <person name="Town C.D."/>
            <person name="Utterback T."/>
            <person name="Van Aken S."/>
            <person name="Vaysberg M."/>
            <person name="Vysotskaia V.S."/>
            <person name="Walker M."/>
            <person name="Wu D."/>
            <person name="Yu G."/>
            <person name="Fraser C.M."/>
            <person name="Venter J.C."/>
            <person name="Davis R.W."/>
        </authorList>
    </citation>
    <scope>NUCLEOTIDE SEQUENCE [LARGE SCALE GENOMIC DNA]</scope>
    <source>
        <strain>cv. Columbia</strain>
    </source>
</reference>
<reference key="2">
    <citation type="journal article" date="2017" name="Plant J.">
        <title>Araport11: a complete reannotation of the Arabidopsis thaliana reference genome.</title>
        <authorList>
            <person name="Cheng C.Y."/>
            <person name="Krishnakumar V."/>
            <person name="Chan A.P."/>
            <person name="Thibaud-Nissen F."/>
            <person name="Schobel S."/>
            <person name="Town C.D."/>
        </authorList>
    </citation>
    <scope>GENOME REANNOTATION</scope>
    <source>
        <strain>cv. Columbia</strain>
    </source>
</reference>
<name>FB308_ARATH</name>
<evidence type="ECO:0000305" key="1"/>
<sequence>MNSFPNDDLVYEILLRLPAKSVARCSCVSKLRRSILSRQDFTELFLTKSSARPRLLFGVKRANGEGLFFSSTQPRNSYEKSSLVVAADFHTKFSEVISREICSYASGLIYLSDMRISVNDEDVVRAICNPITGNYLGFDPIDKQFKVLFMAYPSGPDDHKILTLGTRRMRWRKIHCPLTHDPFCEGICINGVLYYLAIQIDEPLVNQRSFVIVCFDVRFEKFTFIDVDCFYHLINYKGKLGGIDWKHGNANGSRTFELSMWVLEDVEKHEWSKYDCTFLEYEVMFYNISLAVGMTATCEIVLSEKFASKSFYVFYFNPERETLQRVEIQGLENHCRVYTITDHVEDLNVNYKRKHKMALVRRFLAAKKIIGGSVAKLRKETSAILYLNRYWSYPASTTLINYKGKVGVINLTHAYERVFPLQLRMTVLEDFEKQEWSTYVYTLMAENIVVKYVSVVGMTATGDIVLVKTNACKPFYVFYFNPGRNTLLSVEIQGVGEDHKCLNFHTVCAFVDHVEDLQFSFKN</sequence>
<feature type="chain" id="PRO_0000274940" description="Putative F-box protein At1g30925">
    <location>
        <begin position="1"/>
        <end position="523"/>
    </location>
</feature>
<feature type="domain" description="F-box">
    <location>
        <begin position="4"/>
        <end position="44"/>
    </location>
</feature>
<protein>
    <recommendedName>
        <fullName>Putative F-box protein At1g30925</fullName>
    </recommendedName>
</protein>
<comment type="sequence caution" evidence="1">
    <conflict type="erroneous gene model prediction">
        <sequence resource="EMBL-CDS" id="AAF98191"/>
    </conflict>
    <text>The predicted gene has been split into 3 genes: At1g30920, At1g30921 and At1g30925.</text>
</comment>
<dbReference type="EMBL" id="AC000107">
    <property type="protein sequence ID" value="AAF98191.1"/>
    <property type="status" value="ALT_SEQ"/>
    <property type="molecule type" value="Genomic_DNA"/>
</dbReference>
<dbReference type="EMBL" id="CP002684">
    <property type="protein sequence ID" value="AEE31294.2"/>
    <property type="molecule type" value="Genomic_DNA"/>
</dbReference>
<dbReference type="PIR" id="H86434">
    <property type="entry name" value="H86434"/>
</dbReference>
<dbReference type="RefSeq" id="NP_001319119.1">
    <property type="nucleotide sequence ID" value="NM_001332932.1"/>
</dbReference>
<dbReference type="FunCoup" id="P0C2G3">
    <property type="interactions" value="2"/>
</dbReference>
<dbReference type="STRING" id="3702.P0C2G3"/>
<dbReference type="PaxDb" id="3702-AT1G30925.1"/>
<dbReference type="ProteomicsDB" id="230082"/>
<dbReference type="EnsemblPlants" id="AT1G30925.1">
    <property type="protein sequence ID" value="AT1G30925.1"/>
    <property type="gene ID" value="AT1G30925"/>
</dbReference>
<dbReference type="GeneID" id="3766857"/>
<dbReference type="Gramene" id="AT1G30925.1">
    <property type="protein sequence ID" value="AT1G30925.1"/>
    <property type="gene ID" value="AT1G30925"/>
</dbReference>
<dbReference type="KEGG" id="ath:AT1G30925"/>
<dbReference type="Araport" id="AT1G30925"/>
<dbReference type="TAIR" id="AT1G30925"/>
<dbReference type="HOGENOM" id="CLU_740446_0_0_1"/>
<dbReference type="InParanoid" id="P0C2G3"/>
<dbReference type="OMA" id="HEWSKYD"/>
<dbReference type="PRO" id="PR:P0C2G3"/>
<dbReference type="Proteomes" id="UP000006548">
    <property type="component" value="Chromosome 1"/>
</dbReference>
<dbReference type="ExpressionAtlas" id="P0C2G3">
    <property type="expression patterns" value="baseline"/>
</dbReference>
<dbReference type="InterPro" id="IPR013187">
    <property type="entry name" value="F-box-assoc_dom_typ3"/>
</dbReference>
<dbReference type="InterPro" id="IPR017451">
    <property type="entry name" value="F-box-assoc_interact_dom"/>
</dbReference>
<dbReference type="InterPro" id="IPR036047">
    <property type="entry name" value="F-box-like_dom_sf"/>
</dbReference>
<dbReference type="InterPro" id="IPR001810">
    <property type="entry name" value="F-box_dom"/>
</dbReference>
<dbReference type="NCBIfam" id="TIGR01640">
    <property type="entry name" value="F_box_assoc_1"/>
    <property type="match status" value="2"/>
</dbReference>
<dbReference type="PANTHER" id="PTHR31111">
    <property type="entry name" value="BNAA05G37150D PROTEIN-RELATED"/>
    <property type="match status" value="1"/>
</dbReference>
<dbReference type="PANTHER" id="PTHR31111:SF125">
    <property type="entry name" value="F-BOX PROTEIN CPR30-LIKE"/>
    <property type="match status" value="1"/>
</dbReference>
<dbReference type="Pfam" id="PF00646">
    <property type="entry name" value="F-box"/>
    <property type="match status" value="1"/>
</dbReference>
<dbReference type="Pfam" id="PF08268">
    <property type="entry name" value="FBA_3"/>
    <property type="match status" value="2"/>
</dbReference>
<dbReference type="SUPFAM" id="SSF81383">
    <property type="entry name" value="F-box domain"/>
    <property type="match status" value="1"/>
</dbReference>
<accession>P0C2G3</accession>
<accession>F4I7T5</accession>
<accession>Q9FYH9</accession>
<proteinExistence type="predicted"/>
<gene>
    <name type="ordered locus">At1g30925</name>
    <name type="ORF">F17F8.41</name>
</gene>